<protein>
    <recommendedName>
        <fullName evidence="3">Iminosuccinate reductase</fullName>
        <ecNumber evidence="2">1.4.1.-</ecNumber>
    </recommendedName>
</protein>
<evidence type="ECO:0000250" key="1">
    <source>
        <dbReference type="UniProtKB" id="O28608"/>
    </source>
</evidence>
<evidence type="ECO:0000269" key="2">
    <source>
    </source>
</evidence>
<evidence type="ECO:0000303" key="3">
    <source>
    </source>
</evidence>
<evidence type="ECO:0000305" key="4">
    <source>
    </source>
</evidence>
<evidence type="ECO:0000312" key="5">
    <source>
        <dbReference type="EMBL" id="ABL71984.1"/>
    </source>
</evidence>
<evidence type="ECO:0007744" key="6">
    <source>
        <dbReference type="PDB" id="6RQA"/>
    </source>
</evidence>
<evidence type="ECO:0007829" key="7">
    <source>
        <dbReference type="PDB" id="6RQA"/>
    </source>
</evidence>
<accession>A1B8Z0</accession>
<dbReference type="EC" id="1.4.1.-" evidence="2"/>
<dbReference type="EMBL" id="CP000490">
    <property type="protein sequence ID" value="ABL71984.1"/>
    <property type="molecule type" value="Genomic_DNA"/>
</dbReference>
<dbReference type="RefSeq" id="WP_011750151.1">
    <property type="nucleotide sequence ID" value="NC_008687.1"/>
</dbReference>
<dbReference type="PDB" id="6RQA">
    <property type="method" value="X-ray"/>
    <property type="resolution" value="2.56 A"/>
    <property type="chains" value="A/B=1-320"/>
</dbReference>
<dbReference type="PDBsum" id="6RQA"/>
<dbReference type="SMR" id="A1B8Z0"/>
<dbReference type="STRING" id="318586.Pden_3918"/>
<dbReference type="EnsemblBacteria" id="ABL71984">
    <property type="protein sequence ID" value="ABL71984"/>
    <property type="gene ID" value="Pden_3918"/>
</dbReference>
<dbReference type="GeneID" id="93453578"/>
<dbReference type="KEGG" id="pde:Pden_3918"/>
<dbReference type="eggNOG" id="COG2423">
    <property type="taxonomic scope" value="Bacteria"/>
</dbReference>
<dbReference type="HOGENOM" id="CLU_042088_2_0_5"/>
<dbReference type="OrthoDB" id="9801817at2"/>
<dbReference type="Proteomes" id="UP000000361">
    <property type="component" value="Chromosome 2"/>
</dbReference>
<dbReference type="GO" id="GO:0005737">
    <property type="term" value="C:cytoplasm"/>
    <property type="evidence" value="ECO:0007669"/>
    <property type="project" value="TreeGrafter"/>
</dbReference>
<dbReference type="GO" id="GO:0070404">
    <property type="term" value="F:NADH binding"/>
    <property type="evidence" value="ECO:0000314"/>
    <property type="project" value="UniProtKB"/>
</dbReference>
<dbReference type="GO" id="GO:0016639">
    <property type="term" value="F:oxidoreductase activity, acting on the CH-NH2 group of donors, NAD or NADP as acceptor"/>
    <property type="evidence" value="ECO:0000314"/>
    <property type="project" value="UniProtKB"/>
</dbReference>
<dbReference type="GO" id="GO:0046296">
    <property type="term" value="P:glycolate catabolic process"/>
    <property type="evidence" value="ECO:0000315"/>
    <property type="project" value="UniProtKB"/>
</dbReference>
<dbReference type="GO" id="GO:0009436">
    <property type="term" value="P:glyoxylate catabolic process"/>
    <property type="evidence" value="ECO:0000315"/>
    <property type="project" value="UniProtKB"/>
</dbReference>
<dbReference type="Gene3D" id="3.40.50.720">
    <property type="entry name" value="NAD(P)-binding Rossmann-like Domain"/>
    <property type="match status" value="1"/>
</dbReference>
<dbReference type="Gene3D" id="3.30.1780.10">
    <property type="entry name" value="ornithine cyclodeaminase, domain 1"/>
    <property type="match status" value="1"/>
</dbReference>
<dbReference type="InterPro" id="IPR054860">
    <property type="entry name" value="ImmsucRedBhcD"/>
</dbReference>
<dbReference type="InterPro" id="IPR036291">
    <property type="entry name" value="NAD(P)-bd_dom_sf"/>
</dbReference>
<dbReference type="InterPro" id="IPR003462">
    <property type="entry name" value="ODC_Mu_crystall"/>
</dbReference>
<dbReference type="InterPro" id="IPR023401">
    <property type="entry name" value="ODC_N"/>
</dbReference>
<dbReference type="NCBIfam" id="NF045643">
    <property type="entry name" value="ImmsucRedBhcD"/>
    <property type="match status" value="1"/>
</dbReference>
<dbReference type="PANTHER" id="PTHR13812">
    <property type="entry name" value="KETIMINE REDUCTASE MU-CRYSTALLIN"/>
    <property type="match status" value="1"/>
</dbReference>
<dbReference type="PANTHER" id="PTHR13812:SF19">
    <property type="entry name" value="KETIMINE REDUCTASE MU-CRYSTALLIN"/>
    <property type="match status" value="1"/>
</dbReference>
<dbReference type="Pfam" id="PF02423">
    <property type="entry name" value="OCD_Mu_crystall"/>
    <property type="match status" value="1"/>
</dbReference>
<dbReference type="PIRSF" id="PIRSF001439">
    <property type="entry name" value="CryM"/>
    <property type="match status" value="1"/>
</dbReference>
<dbReference type="SUPFAM" id="SSF51735">
    <property type="entry name" value="NAD(P)-binding Rossmann-fold domains"/>
    <property type="match status" value="1"/>
</dbReference>
<name>BHCD_PARDP</name>
<feature type="chain" id="PRO_0000449099" description="Iminosuccinate reductase">
    <location>
        <begin position="1"/>
        <end position="320"/>
    </location>
</feature>
<feature type="active site" description="Proton donor/acceptor" evidence="1">
    <location>
        <position position="67"/>
    </location>
</feature>
<feature type="binding site" evidence="2">
    <location>
        <position position="110"/>
    </location>
    <ligand>
        <name>NAD(+)</name>
        <dbReference type="ChEBI" id="CHEBI:57540"/>
    </ligand>
</feature>
<feature type="binding site" evidence="2">
    <location>
        <begin position="137"/>
        <end position="138"/>
    </location>
    <ligand>
        <name>NAD(+)</name>
        <dbReference type="ChEBI" id="CHEBI:57540"/>
    </ligand>
</feature>
<feature type="binding site" evidence="2">
    <location>
        <position position="159"/>
    </location>
    <ligand>
        <name>NAD(+)</name>
        <dbReference type="ChEBI" id="CHEBI:57540"/>
    </ligand>
</feature>
<feature type="binding site" evidence="2">
    <location>
        <position position="199"/>
    </location>
    <ligand>
        <name>NAD(+)</name>
        <dbReference type="ChEBI" id="CHEBI:57540"/>
    </ligand>
</feature>
<feature type="binding site" evidence="2">
    <location>
        <begin position="219"/>
        <end position="222"/>
    </location>
    <ligand>
        <name>NAD(+)</name>
        <dbReference type="ChEBI" id="CHEBI:57540"/>
    </ligand>
</feature>
<feature type="binding site" evidence="2">
    <location>
        <position position="226"/>
    </location>
    <ligand>
        <name>NAD(+)</name>
        <dbReference type="ChEBI" id="CHEBI:57540"/>
    </ligand>
</feature>
<feature type="binding site" evidence="2">
    <location>
        <position position="291"/>
    </location>
    <ligand>
        <name>NAD(+)</name>
        <dbReference type="ChEBI" id="CHEBI:57540"/>
    </ligand>
</feature>
<feature type="strand" evidence="7">
    <location>
        <begin position="1"/>
        <end position="4"/>
    </location>
</feature>
<feature type="helix" evidence="7">
    <location>
        <begin position="6"/>
        <end position="8"/>
    </location>
</feature>
<feature type="helix" evidence="7">
    <location>
        <begin position="9"/>
        <end position="12"/>
    </location>
</feature>
<feature type="helix" evidence="7">
    <location>
        <begin position="15"/>
        <end position="30"/>
    </location>
</feature>
<feature type="strand" evidence="7">
    <location>
        <begin position="33"/>
        <end position="36"/>
    </location>
</feature>
<feature type="strand" evidence="7">
    <location>
        <begin position="40"/>
        <end position="43"/>
    </location>
</feature>
<feature type="strand" evidence="7">
    <location>
        <begin position="50"/>
        <end position="58"/>
    </location>
</feature>
<feature type="turn" evidence="7">
    <location>
        <begin position="59"/>
        <end position="62"/>
    </location>
</feature>
<feature type="strand" evidence="7">
    <location>
        <begin position="63"/>
        <end position="71"/>
    </location>
</feature>
<feature type="helix" evidence="7">
    <location>
        <begin position="75"/>
        <end position="78"/>
    </location>
</feature>
<feature type="strand" evidence="7">
    <location>
        <begin position="82"/>
        <end position="90"/>
    </location>
</feature>
<feature type="turn" evidence="7">
    <location>
        <begin position="92"/>
        <end position="94"/>
    </location>
</feature>
<feature type="strand" evidence="7">
    <location>
        <begin position="97"/>
        <end position="102"/>
    </location>
</feature>
<feature type="helix" evidence="7">
    <location>
        <begin position="104"/>
        <end position="122"/>
    </location>
</feature>
<feature type="strand" evidence="7">
    <location>
        <begin position="129"/>
        <end position="133"/>
    </location>
</feature>
<feature type="helix" evidence="7">
    <location>
        <begin position="137"/>
        <end position="149"/>
    </location>
</feature>
<feature type="strand" evidence="7">
    <location>
        <begin position="153"/>
        <end position="158"/>
    </location>
</feature>
<feature type="helix" evidence="7">
    <location>
        <begin position="162"/>
        <end position="164"/>
    </location>
</feature>
<feature type="helix" evidence="7">
    <location>
        <begin position="165"/>
        <end position="174"/>
    </location>
</feature>
<feature type="strand" evidence="7">
    <location>
        <begin position="179"/>
        <end position="181"/>
    </location>
</feature>
<feature type="helix" evidence="7">
    <location>
        <begin position="184"/>
        <end position="190"/>
    </location>
</feature>
<feature type="strand" evidence="7">
    <location>
        <begin position="192"/>
        <end position="196"/>
    </location>
</feature>
<feature type="strand" evidence="7">
    <location>
        <begin position="201"/>
        <end position="205"/>
    </location>
</feature>
<feature type="turn" evidence="7">
    <location>
        <begin position="207"/>
        <end position="209"/>
    </location>
</feature>
<feature type="strand" evidence="7">
    <location>
        <begin position="212"/>
        <end position="218"/>
    </location>
</feature>
<feature type="strand" evidence="7">
    <location>
        <begin position="227"/>
        <end position="229"/>
    </location>
</feature>
<feature type="helix" evidence="7">
    <location>
        <begin position="231"/>
        <end position="235"/>
    </location>
</feature>
<feature type="strand" evidence="7">
    <location>
        <begin position="237"/>
        <end position="242"/>
    </location>
</feature>
<feature type="helix" evidence="7">
    <location>
        <begin position="244"/>
        <end position="249"/>
    </location>
</feature>
<feature type="helix" evidence="7">
    <location>
        <begin position="254"/>
        <end position="258"/>
    </location>
</feature>
<feature type="helix" evidence="7">
    <location>
        <begin position="264"/>
        <end position="266"/>
    </location>
</feature>
<feature type="strand" evidence="7">
    <location>
        <begin position="267"/>
        <end position="269"/>
    </location>
</feature>
<feature type="helix" evidence="7">
    <location>
        <begin position="270"/>
        <end position="274"/>
    </location>
</feature>
<feature type="strand" evidence="7">
    <location>
        <begin position="285"/>
        <end position="290"/>
    </location>
</feature>
<feature type="helix" evidence="7">
    <location>
        <begin position="295"/>
        <end position="312"/>
    </location>
</feature>
<feature type="strand" evidence="7">
    <location>
        <begin position="316"/>
        <end position="318"/>
    </location>
</feature>
<reference key="1">
    <citation type="submission" date="2006-12" db="EMBL/GenBank/DDBJ databases">
        <title>Complete sequence of chromosome 2 of Paracoccus denitrificans PD1222.</title>
        <authorList>
            <person name="Copeland A."/>
            <person name="Lucas S."/>
            <person name="Lapidus A."/>
            <person name="Barry K."/>
            <person name="Detter J.C."/>
            <person name="Glavina del Rio T."/>
            <person name="Hammon N."/>
            <person name="Israni S."/>
            <person name="Dalin E."/>
            <person name="Tice H."/>
            <person name="Pitluck S."/>
            <person name="Munk A.C."/>
            <person name="Brettin T."/>
            <person name="Bruce D."/>
            <person name="Han C."/>
            <person name="Tapia R."/>
            <person name="Gilna P."/>
            <person name="Schmutz J."/>
            <person name="Larimer F."/>
            <person name="Land M."/>
            <person name="Hauser L."/>
            <person name="Kyrpides N."/>
            <person name="Lykidis A."/>
            <person name="Spiro S."/>
            <person name="Richardson D.J."/>
            <person name="Moir J.W.B."/>
            <person name="Ferguson S.J."/>
            <person name="van Spanning R.J.M."/>
            <person name="Richardson P."/>
        </authorList>
    </citation>
    <scope>NUCLEOTIDE SEQUENCE [LARGE SCALE GENOMIC DNA]</scope>
    <source>
        <strain>Pd 1222</strain>
    </source>
</reference>
<reference evidence="6" key="2">
    <citation type="journal article" date="2019" name="Nature">
        <title>Marine Proteobacteria metabolize glycolate via the beta-hydroxyaspartate cycle.</title>
        <authorList>
            <person name="Schada von Borzyskowski L."/>
            <person name="Severi F."/>
            <person name="Krueger K."/>
            <person name="Hermann L."/>
            <person name="Gilardet A."/>
            <person name="Sippel F."/>
            <person name="Pommerenke B."/>
            <person name="Claus P."/>
            <person name="Cortina N.S."/>
            <person name="Glatter T."/>
            <person name="Zauner S."/>
            <person name="Zarzycki J."/>
            <person name="Fuchs B.M."/>
            <person name="Bremer E."/>
            <person name="Maier U.G."/>
            <person name="Amann R.I."/>
            <person name="Erb T.J."/>
        </authorList>
    </citation>
    <scope>X-RAY CRYSTALLOGRAPHY (2.56 ANGSTROMS) IN COMPLEX WITH NAD</scope>
    <scope>FUNCTION</scope>
    <scope>CATALYTIC ACTIVITY</scope>
    <scope>BIOPHYSICOCHEMICAL PROPERTIES</scope>
    <scope>DISRUPTION PHENOTYPE</scope>
    <scope>INDUCTION</scope>
    <source>
        <strain>ATCC 17741 / DSM 413 / NBRC 16712 / NCCB 22021 / NCIMB 11627</strain>
    </source>
</reference>
<sequence length="320" mass="33655">MLVVAEKEIAGLMTPEAAFEAIEAVFASMARRKAYNFPVVREAIGHEDALYGFKGGFDASALVLGLKAGGYWPNNQKHNLINHQSTVFLFDPDTGRVSAAVGGNLLTALRTAAASAVSIKYLAPKGAKVLGMIGAGHQSAFQMRAAANVHRFEKVIGWNPHPEMLSRLADTAAELGLPFEAVELDRLGAEADVIVSITSSFSPLLMNEHVKGPTHIAAMGTDTKGKQELDPALVARARIFTDEVAQSVSIGECQHAIAAGLIREDQVGELGAVVAGDDPGRGDAEVTIFDGTGVGLQDLAVAQAVVELAKHKGVAQEVEI</sequence>
<gene>
    <name evidence="3" type="primary">bhcD</name>
    <name evidence="5" type="ordered locus">Pden_3918</name>
</gene>
<comment type="function">
    <text evidence="2">Imine reductase that catalyzes the NADH-dependent reduction of iminosuccinate to L-aspartate. Is essential for the growth of P.denitrificans in the presence of glycolate and glyoxylate since it functions in glyoxylate assimilation via the beta-hydroxyaspartate cycle (BHAC). Thereby BhcD regenerates the amino group donor for the first step of the BHAC.</text>
</comment>
<comment type="catalytic activity">
    <reaction evidence="2">
        <text>L-aspartate + NAD(+) = iminosuccinate + NADH + H(+)</text>
        <dbReference type="Rhea" id="RHEA:42440"/>
        <dbReference type="ChEBI" id="CHEBI:15378"/>
        <dbReference type="ChEBI" id="CHEBI:29991"/>
        <dbReference type="ChEBI" id="CHEBI:57540"/>
        <dbReference type="ChEBI" id="CHEBI:57945"/>
        <dbReference type="ChEBI" id="CHEBI:77875"/>
    </reaction>
    <physiologicalReaction direction="right-to-left" evidence="2">
        <dbReference type="Rhea" id="RHEA:42442"/>
    </physiologicalReaction>
</comment>
<comment type="biophysicochemical properties">
    <kinetics>
        <KM evidence="2">0.09 mM for iminosuccinate</KM>
        <KM evidence="2">0.02 mM for NADH</KM>
        <KM evidence="2">0.33 mM for NADPH</KM>
        <text evidence="2">kcat is 201 sec(-1).</text>
    </kinetics>
</comment>
<comment type="induction">
    <text evidence="2">Induced by glycolate.</text>
</comment>
<comment type="disruption phenotype">
    <text evidence="2">Abolishes growth on glycolate or glyoxylate, but the deletion mutant strain is still able to grow on acetate, succinate or glucose with comparable growth rates as for the wild type.</text>
</comment>
<comment type="miscellaneous">
    <text evidence="2">Iminosuccinate is a labile compound that spontaneously decays into free ammonia and oxaloacetate in solution.</text>
</comment>
<comment type="miscellaneous">
    <text evidence="4">The beta-hydroxyaspartate cycle (BHAC) consists of BhcA, BhcB, BhcC, and BhcD enzyme activities. Overall, it converts two molecules of glyoxylate (C2) into oxaloacetate (C4) without the loss of carbon as CO2, under consumption of just one reducing equivalent and regeneration of the catalytic amino donor, which makes it one of the most efficient glyoxylate assimilation pathways. This cycle is of ecological importance in the assimilation of phytoplankton-derived dissolved organic carbon in marine environments by marine Proteobacteria, and suggests a trophic interaction between autotrophic phytoplankton and heterotrophic bacterioplankton. Oxaloacetate formed in the BHAC can directly enter the tricarboxylic acid cycle or serve as substrate for anabolic reactions.</text>
</comment>
<comment type="similarity">
    <text evidence="4">Belongs to the ornithine cyclodeaminase/mu-crystallin family. BhcD subfamily.</text>
</comment>
<organism>
    <name type="scientific">Paracoccus denitrificans (strain Pd 1222)</name>
    <dbReference type="NCBI Taxonomy" id="318586"/>
    <lineage>
        <taxon>Bacteria</taxon>
        <taxon>Pseudomonadati</taxon>
        <taxon>Pseudomonadota</taxon>
        <taxon>Alphaproteobacteria</taxon>
        <taxon>Rhodobacterales</taxon>
        <taxon>Paracoccaceae</taxon>
        <taxon>Paracoccus</taxon>
    </lineage>
</organism>
<proteinExistence type="evidence at protein level"/>
<keyword id="KW-0002">3D-structure</keyword>
<keyword id="KW-0520">NAD</keyword>
<keyword id="KW-0547">Nucleotide-binding</keyword>
<keyword id="KW-0560">Oxidoreductase</keyword>
<keyword id="KW-1185">Reference proteome</keyword>